<reference key="1">
    <citation type="journal article" date="2007" name="Proc. Natl. Acad. Sci. U.S.A.">
        <title>Independent sorting-out of thousands of duplicated gene pairs in two yeast species descended from a whole-genome duplication.</title>
        <authorList>
            <person name="Scannell D.R."/>
            <person name="Frank A.C."/>
            <person name="Conant G.C."/>
            <person name="Byrne K.P."/>
            <person name="Woolfit M."/>
            <person name="Wolfe K.H."/>
        </authorList>
    </citation>
    <scope>NUCLEOTIDE SEQUENCE [LARGE SCALE GENOMIC DNA]</scope>
    <source>
        <strain>ATCC 22028 / DSM 70294 / BCRC 21397 / CBS 2163 / NBRC 10782 / NRRL Y-8283 / UCD 57-17</strain>
    </source>
</reference>
<keyword id="KW-0472">Membrane</keyword>
<keyword id="KW-0496">Mitochondrion</keyword>
<keyword id="KW-1000">Mitochondrion outer membrane</keyword>
<keyword id="KW-1185">Reference proteome</keyword>
<keyword id="KW-0812">Transmembrane</keyword>
<keyword id="KW-1134">Transmembrane beta strand</keyword>
<protein>
    <recommendedName>
        <fullName evidence="1">Mitochondrial distribution and morphology protein 10</fullName>
    </recommendedName>
    <alternativeName>
        <fullName evidence="1">Mitochondrial inheritance component MDM10</fullName>
    </alternativeName>
</protein>
<dbReference type="EMBL" id="DS480432">
    <property type="protein sequence ID" value="EDO16127.1"/>
    <property type="molecule type" value="Genomic_DNA"/>
</dbReference>
<dbReference type="RefSeq" id="XP_001643985.1">
    <property type="nucleotide sequence ID" value="XM_001643935.1"/>
</dbReference>
<dbReference type="SMR" id="A7TNL0"/>
<dbReference type="FunCoup" id="A7TNL0">
    <property type="interactions" value="86"/>
</dbReference>
<dbReference type="STRING" id="436907.A7TNL0"/>
<dbReference type="GeneID" id="5544264"/>
<dbReference type="KEGG" id="vpo:Kpol_1070p9"/>
<dbReference type="eggNOG" id="ENOG502QUN5">
    <property type="taxonomic scope" value="Eukaryota"/>
</dbReference>
<dbReference type="HOGENOM" id="CLU_026505_0_0_1"/>
<dbReference type="InParanoid" id="A7TNL0"/>
<dbReference type="OMA" id="VPGYRQI"/>
<dbReference type="OrthoDB" id="2103793at2759"/>
<dbReference type="PhylomeDB" id="A7TNL0"/>
<dbReference type="Proteomes" id="UP000000267">
    <property type="component" value="Unassembled WGS sequence"/>
</dbReference>
<dbReference type="GO" id="GO:0032865">
    <property type="term" value="C:ERMES complex"/>
    <property type="evidence" value="ECO:0007669"/>
    <property type="project" value="UniProtKB-UniRule"/>
</dbReference>
<dbReference type="GO" id="GO:0001401">
    <property type="term" value="C:SAM complex"/>
    <property type="evidence" value="ECO:0007669"/>
    <property type="project" value="EnsemblFungi"/>
</dbReference>
<dbReference type="GO" id="GO:0051654">
    <property type="term" value="P:establishment of mitochondrion localization"/>
    <property type="evidence" value="ECO:0007669"/>
    <property type="project" value="EnsemblFungi"/>
</dbReference>
<dbReference type="GO" id="GO:0000002">
    <property type="term" value="P:mitochondrial genome maintenance"/>
    <property type="evidence" value="ECO:0007669"/>
    <property type="project" value="UniProtKB-UniRule"/>
</dbReference>
<dbReference type="GO" id="GO:0070096">
    <property type="term" value="P:mitochondrial outer membrane translocase complex assembly"/>
    <property type="evidence" value="ECO:0007669"/>
    <property type="project" value="UniProtKB-UniRule"/>
</dbReference>
<dbReference type="GO" id="GO:1990456">
    <property type="term" value="P:mitochondrion-endoplasmic reticulum membrane tethering"/>
    <property type="evidence" value="ECO:0007669"/>
    <property type="project" value="UniProtKB-UniRule"/>
</dbReference>
<dbReference type="GO" id="GO:0007031">
    <property type="term" value="P:peroxisome organization"/>
    <property type="evidence" value="ECO:0007669"/>
    <property type="project" value="EnsemblFungi"/>
</dbReference>
<dbReference type="GO" id="GO:0015914">
    <property type="term" value="P:phospholipid transport"/>
    <property type="evidence" value="ECO:0007669"/>
    <property type="project" value="EnsemblFungi"/>
</dbReference>
<dbReference type="GO" id="GO:0045040">
    <property type="term" value="P:protein insertion into mitochondrial outer membrane"/>
    <property type="evidence" value="ECO:0007669"/>
    <property type="project" value="UniProtKB-UniRule"/>
</dbReference>
<dbReference type="HAMAP" id="MF_03102">
    <property type="entry name" value="Mdm10"/>
    <property type="match status" value="1"/>
</dbReference>
<dbReference type="InterPro" id="IPR027539">
    <property type="entry name" value="Mdm10"/>
</dbReference>
<dbReference type="PANTHER" id="PTHR28035">
    <property type="entry name" value="MITOCHONDRIAL DISTRIBUTION AND MORPHOLOGY PROTEIN 10"/>
    <property type="match status" value="1"/>
</dbReference>
<dbReference type="PANTHER" id="PTHR28035:SF1">
    <property type="entry name" value="MITOCHONDRIAL DISTRIBUTION AND MORPHOLOGY PROTEIN 10"/>
    <property type="match status" value="1"/>
</dbReference>
<dbReference type="Pfam" id="PF12519">
    <property type="entry name" value="MDM10"/>
    <property type="match status" value="1"/>
</dbReference>
<feature type="chain" id="PRO_0000384205" description="Mitochondrial distribution and morphology protein 10">
    <location>
        <begin position="1"/>
        <end position="421"/>
    </location>
</feature>
<organism>
    <name type="scientific">Vanderwaltozyma polyspora (strain ATCC 22028 / DSM 70294 / BCRC 21397 / CBS 2163 / NBRC 10782 / NRRL Y-8283 / UCD 57-17)</name>
    <name type="common">Kluyveromyces polysporus</name>
    <dbReference type="NCBI Taxonomy" id="436907"/>
    <lineage>
        <taxon>Eukaryota</taxon>
        <taxon>Fungi</taxon>
        <taxon>Dikarya</taxon>
        <taxon>Ascomycota</taxon>
        <taxon>Saccharomycotina</taxon>
        <taxon>Saccharomycetes</taxon>
        <taxon>Saccharomycetales</taxon>
        <taxon>Saccharomycetaceae</taxon>
        <taxon>Vanderwaltozyma</taxon>
    </lineage>
</organism>
<proteinExistence type="inferred from homology"/>
<name>MDM10_VANPO</name>
<accession>A7TNL0</accession>
<comment type="function">
    <text evidence="1">Component of the ERMES/MDM complex, which serves as a molecular tether to connect the endoplasmic reticulum and mitochondria. Components of this complex are involved in the control of mitochondrial shape and protein biogenesis and may function in phospholipid exchange. MDM10 is involved in the late assembly steps of the general translocase of the mitochondrial outer membrane (TOM complex). Functions in the TOM40-specific route of the assembly of outer membrane beta-barrel proteins, including the association of TOM40 with the receptor TOM22 and small TOM proteins. Can associate with the SAM(core) complex as well as the MDM12-MMM1 complex, both involved in late steps of the major beta-barrel assembly pathway, that is responsible for biogenesis of all outer membrane beta-barrel proteins. May act as a switch that shuttles between both complexes and channels precursor proteins into the TOM40-specific pathway. Plays a role in mitochondrial morphology and in the inheritance of mitochondria.</text>
</comment>
<comment type="subunit">
    <text evidence="1">Component of the ER-mitochondria encounter structure (ERMES) or MDM complex, composed of MMM1, MDM10, MDM12 and MDM34. Associates with the mitochondrial outer membrane sorting assembly machinery SAM(core) complex.</text>
</comment>
<comment type="subcellular location">
    <subcellularLocation>
        <location evidence="1">Mitochondrion outer membrane</location>
        <topology evidence="1">Multi-pass membrane protein</topology>
    </subcellularLocation>
    <text evidence="1">The ERMES/MDM complex localizes to a few discrete foci (around 10 per single cell), that represent mitochondria-endoplasmic reticulum junctions. These foci are often found next to mtDNA nucleoids.</text>
</comment>
<comment type="domain">
    <text>Lacks alpha-helical transmembrane segments, suggesting that it resides in the membrane via beta-sheet conformations similar to those predicted for other outer membrane proteins and porin.</text>
</comment>
<comment type="similarity">
    <text evidence="1">Belongs to the MDM10 family.</text>
</comment>
<sequence>MIEYMNYVIKSLQSNNDYEHLTLSSRSLLNFKIPNAFKFQLSNKSTPYTYNTIDISTNKVINGSITYLYTDAKGLDKLIKDSHNINIQSIVETYNHHCKTLNINKQNVDFKSLYYGRMYYPNSHLEGMIIKKFTTNTQVVLKWVSSFNSCNIITGYFQKYGKRNFQELIVSSNDFLCGYRFLHNFIEQPSKLNNSLYNNSYISLGGEFWLAISTLSPTCATTLRYCTHSATTGRPLTLTLSFNPLFGHLSSTYSAKTSSNSAFCVQYDFNLYSIDSNLSLGCELWKQNELIQNVSQEKSKKQEIQVPPNFYNNNSNDAKQKRILNDLNTTFESSLKKIDKERAVIENFETDLYNKDFTSVWKFSTSLRDKNLCILWDGKFKGFLLSAGTELIRINTNNENNSQSLVKFYPAKLGLQLQFST</sequence>
<evidence type="ECO:0000255" key="1">
    <source>
        <dbReference type="HAMAP-Rule" id="MF_03102"/>
    </source>
</evidence>
<gene>
    <name evidence="1" type="primary">MDM10</name>
    <name type="ORF">Kpol_1070p9</name>
</gene>